<dbReference type="EMBL" id="CP000255">
    <property type="protein sequence ID" value="ABD21846.1"/>
    <property type="molecule type" value="Genomic_DNA"/>
</dbReference>
<dbReference type="RefSeq" id="WP_000054609.1">
    <property type="nucleotide sequence ID" value="NZ_CP027476.1"/>
</dbReference>
<dbReference type="SMR" id="Q2FIC3"/>
<dbReference type="KEGG" id="saa:SAUSA300_0855"/>
<dbReference type="HOGENOM" id="CLU_007100_2_1_9"/>
<dbReference type="OMA" id="AWQAKYH"/>
<dbReference type="Proteomes" id="UP000001939">
    <property type="component" value="Chromosome"/>
</dbReference>
<dbReference type="GO" id="GO:0005886">
    <property type="term" value="C:plasma membrane"/>
    <property type="evidence" value="ECO:0007669"/>
    <property type="project" value="UniProtKB-SubCell"/>
</dbReference>
<dbReference type="GO" id="GO:0015297">
    <property type="term" value="F:antiporter activity"/>
    <property type="evidence" value="ECO:0007669"/>
    <property type="project" value="UniProtKB-KW"/>
</dbReference>
<dbReference type="GO" id="GO:1902600">
    <property type="term" value="P:proton transmembrane transport"/>
    <property type="evidence" value="ECO:0007669"/>
    <property type="project" value="UniProtKB-KW"/>
</dbReference>
<dbReference type="GO" id="GO:0006814">
    <property type="term" value="P:sodium ion transport"/>
    <property type="evidence" value="ECO:0007669"/>
    <property type="project" value="UniProtKB-KW"/>
</dbReference>
<dbReference type="InterPro" id="IPR050616">
    <property type="entry name" value="CPA3_Na-H_Antiporter_A"/>
</dbReference>
<dbReference type="InterPro" id="IPR005663">
    <property type="entry name" value="MrpA/MnhA1/PhaAB"/>
</dbReference>
<dbReference type="InterPro" id="IPR025383">
    <property type="entry name" value="MrpA_C/MbhD"/>
</dbReference>
<dbReference type="InterPro" id="IPR046806">
    <property type="entry name" value="MrpA_C/MbhE"/>
</dbReference>
<dbReference type="InterPro" id="IPR001750">
    <property type="entry name" value="ND/Mrp_TM"/>
</dbReference>
<dbReference type="InterPro" id="IPR001516">
    <property type="entry name" value="Proton_antipo_N"/>
</dbReference>
<dbReference type="NCBIfam" id="TIGR00940">
    <property type="entry name" value="2a6301s01"/>
    <property type="match status" value="1"/>
</dbReference>
<dbReference type="NCBIfam" id="NF009285">
    <property type="entry name" value="PRK12645.1"/>
    <property type="match status" value="1"/>
</dbReference>
<dbReference type="PANTHER" id="PTHR43373">
    <property type="entry name" value="NA(+)/H(+) ANTIPORTER SUBUNIT"/>
    <property type="match status" value="1"/>
</dbReference>
<dbReference type="PANTHER" id="PTHR43373:SF1">
    <property type="entry name" value="NA(+)_H(+) ANTIPORTER SUBUNIT A"/>
    <property type="match status" value="1"/>
</dbReference>
<dbReference type="Pfam" id="PF13244">
    <property type="entry name" value="MbhD"/>
    <property type="match status" value="1"/>
</dbReference>
<dbReference type="Pfam" id="PF20501">
    <property type="entry name" value="MbhE"/>
    <property type="match status" value="1"/>
</dbReference>
<dbReference type="Pfam" id="PF00361">
    <property type="entry name" value="Proton_antipo_M"/>
    <property type="match status" value="1"/>
</dbReference>
<dbReference type="Pfam" id="PF00662">
    <property type="entry name" value="Proton_antipo_N"/>
    <property type="match status" value="1"/>
</dbReference>
<dbReference type="PRINTS" id="PR01434">
    <property type="entry name" value="NADHDHGNASE5"/>
</dbReference>
<dbReference type="PRINTS" id="PR01435">
    <property type="entry name" value="NPOXDRDTASE5"/>
</dbReference>
<gene>
    <name type="primary">mnhA1</name>
    <name type="ordered locus">SAUSA300_0855</name>
</gene>
<name>MNHA1_STAA3</name>
<proteinExistence type="inferred from homology"/>
<reference key="1">
    <citation type="journal article" date="2006" name="Lancet">
        <title>Complete genome sequence of USA300, an epidemic clone of community-acquired meticillin-resistant Staphylococcus aureus.</title>
        <authorList>
            <person name="Diep B.A."/>
            <person name="Gill S.R."/>
            <person name="Chang R.F."/>
            <person name="Phan T.H."/>
            <person name="Chen J.H."/>
            <person name="Davidson M.G."/>
            <person name="Lin F."/>
            <person name="Lin J."/>
            <person name="Carleton H.A."/>
            <person name="Mongodin E.F."/>
            <person name="Sensabaugh G.F."/>
            <person name="Perdreau-Remington F."/>
        </authorList>
    </citation>
    <scope>NUCLEOTIDE SEQUENCE [LARGE SCALE GENOMIC DNA]</scope>
    <source>
        <strain>USA300</strain>
    </source>
</reference>
<evidence type="ECO:0000250" key="1"/>
<evidence type="ECO:0000255" key="2"/>
<evidence type="ECO:0000305" key="3"/>
<sequence length="801" mass="89396">MSLLHIAVILPLIFALIIPILYRFFKRIHLGWFVLPVPIVIFIYMLTLIKTTMSGNTVMKTLNWMPHFGMNFDLYLDGLGLLFSLLISGIGSLVVLYSIGYLSKSEQLGNFYCYLLLFMGAMLGVVLSDNVIILYLFWELTSFSSFLLISFWRERQASIYGAQKSLIITVFGGLSLLGGIILLAIPTQSFSIQYMIQHASEIQNSPFFIFAMILIMIGAFTKSAQFPFYIWLPDAMEAPTPVSAYLHSATMVKAGLYLIARMTPIFAASQGWVWTVTLVGLITLFWASLNATKQQDLKGILAFSTVSQLGMIMAMLGIGAISYHYQGDDSKIYAAAFTAAIFHLINHATFKGALFMITGAVDHSTGTRDVKKLGGLLTIMPISFTITVITALSMAGVPPFNGFLSKESFLETTFTASQANLFSVDTLGYLFPIIGIVGSVFTFVYSIKFIMHIFFGQYKPEQLPKKAHEVSILMLLSPAILATLVIVFGLFPGILTNSIIEPATSSINHTVIDDVEFHMFHGLTPAFLSTLVIYILGILLIVTFSYWVKLLQRQPGKLTFNYWYNRSANVIPNYSEKMTNSYVTDYSRNNLVIIFGALILLTFVTIFSVPFNINFKDVSPIRIFEVCIVILLLSAAFLILFAKSRLFSIIMLSAVGYAVSVLFIFFKAPDLALTQFVVESISTALFLLCFYHLPNLNRYNEKRSFQLTNALIAGGVGLSVIIIGLIAYGNRHFESISKFYQEHVYDLAHGKNMVNVILVDFRGMDTLFESSVLGIAGLAVYTMIKLRKKRQTQGNEVKNHE</sequence>
<keyword id="KW-0050">Antiport</keyword>
<keyword id="KW-1003">Cell membrane</keyword>
<keyword id="KW-0375">Hydrogen ion transport</keyword>
<keyword id="KW-0406">Ion transport</keyword>
<keyword id="KW-0472">Membrane</keyword>
<keyword id="KW-0915">Sodium</keyword>
<keyword id="KW-0739">Sodium transport</keyword>
<keyword id="KW-0812">Transmembrane</keyword>
<keyword id="KW-1133">Transmembrane helix</keyword>
<keyword id="KW-0813">Transport</keyword>
<organism>
    <name type="scientific">Staphylococcus aureus (strain USA300)</name>
    <dbReference type="NCBI Taxonomy" id="367830"/>
    <lineage>
        <taxon>Bacteria</taxon>
        <taxon>Bacillati</taxon>
        <taxon>Bacillota</taxon>
        <taxon>Bacilli</taxon>
        <taxon>Bacillales</taxon>
        <taxon>Staphylococcaceae</taxon>
        <taxon>Staphylococcus</taxon>
    </lineage>
</organism>
<comment type="function">
    <text evidence="1">Mnh complex is a Na(+)/H(+) antiporter involved in Na(+) excretion.</text>
</comment>
<comment type="subunit">
    <text evidence="1">May form a heterooligomeric complex that consists of seven subunits: mnhA1, mnhB1, mnhC1, mnhD1, mnhE1, mnhF1 and mnhG1.</text>
</comment>
<comment type="subcellular location">
    <subcellularLocation>
        <location evidence="3">Cell membrane</location>
        <topology evidence="3">Multi-pass membrane protein</topology>
    </subcellularLocation>
</comment>
<comment type="similarity">
    <text evidence="3">Belongs to the CPA3 antiporters (TC 2.A.63) subunit A family.</text>
</comment>
<protein>
    <recommendedName>
        <fullName>Na(+)/H(+) antiporter subunit A1</fullName>
    </recommendedName>
    <alternativeName>
        <fullName>Mnh complex subunit A1</fullName>
    </alternativeName>
</protein>
<accession>Q2FIC3</accession>
<feature type="chain" id="PRO_0000372100" description="Na(+)/H(+) antiporter subunit A1">
    <location>
        <begin position="1"/>
        <end position="801"/>
    </location>
</feature>
<feature type="transmembrane region" description="Helical" evidence="2">
    <location>
        <begin position="1"/>
        <end position="21"/>
    </location>
</feature>
<feature type="transmembrane region" description="Helical" evidence="2">
    <location>
        <begin position="28"/>
        <end position="48"/>
    </location>
</feature>
<feature type="transmembrane region" description="Helical" evidence="2">
    <location>
        <begin position="79"/>
        <end position="99"/>
    </location>
</feature>
<feature type="transmembrane region" description="Helical" evidence="2">
    <location>
        <begin position="117"/>
        <end position="137"/>
    </location>
</feature>
<feature type="transmembrane region" description="Helical" evidence="2">
    <location>
        <begin position="166"/>
        <end position="186"/>
    </location>
</feature>
<feature type="transmembrane region" description="Helical" evidence="2">
    <location>
        <begin position="206"/>
        <end position="226"/>
    </location>
</feature>
<feature type="transmembrane region" description="Helical" evidence="2">
    <location>
        <begin position="265"/>
        <end position="285"/>
    </location>
</feature>
<feature type="transmembrane region" description="Helical" evidence="2">
    <location>
        <begin position="300"/>
        <end position="320"/>
    </location>
</feature>
<feature type="transmembrane region" description="Helical" evidence="2">
    <location>
        <begin position="337"/>
        <end position="357"/>
    </location>
</feature>
<feature type="transmembrane region" description="Helical" evidence="2">
    <location>
        <begin position="373"/>
        <end position="393"/>
    </location>
</feature>
<feature type="transmembrane region" description="Helical" evidence="2">
    <location>
        <begin position="427"/>
        <end position="447"/>
    </location>
</feature>
<feature type="transmembrane region" description="Helical" evidence="2">
    <location>
        <begin position="472"/>
        <end position="492"/>
    </location>
</feature>
<feature type="transmembrane region" description="Helical" evidence="2">
    <location>
        <begin position="522"/>
        <end position="542"/>
    </location>
</feature>
<feature type="transmembrane region" description="Helical" evidence="2">
    <location>
        <begin position="591"/>
        <end position="611"/>
    </location>
</feature>
<feature type="transmembrane region" description="Helical" evidence="2">
    <location>
        <begin position="623"/>
        <end position="643"/>
    </location>
</feature>
<feature type="transmembrane region" description="Helical" evidence="2">
    <location>
        <begin position="646"/>
        <end position="666"/>
    </location>
</feature>
<feature type="transmembrane region" description="Helical" evidence="2">
    <location>
        <begin position="671"/>
        <end position="691"/>
    </location>
</feature>
<feature type="transmembrane region" description="Helical" evidence="2">
    <location>
        <begin position="707"/>
        <end position="727"/>
    </location>
</feature>
<feature type="transmembrane region" description="Helical" evidence="2">
    <location>
        <begin position="764"/>
        <end position="784"/>
    </location>
</feature>